<evidence type="ECO:0000255" key="1">
    <source>
        <dbReference type="HAMAP-Rule" id="MF_00658"/>
    </source>
</evidence>
<keyword id="KW-0963">Cytoplasm</keyword>
<keyword id="KW-0489">Methyltransferase</keyword>
<keyword id="KW-0698">rRNA processing</keyword>
<keyword id="KW-0949">S-adenosyl-L-methionine</keyword>
<keyword id="KW-0808">Transferase</keyword>
<proteinExistence type="inferred from homology"/>
<accession>B2S801</accession>
<protein>
    <recommendedName>
        <fullName evidence="1">Ribosomal RNA large subunit methyltransferase H</fullName>
        <ecNumber evidence="1">2.1.1.177</ecNumber>
    </recommendedName>
    <alternativeName>
        <fullName evidence="1">23S rRNA (pseudouridine1915-N3)-methyltransferase</fullName>
    </alternativeName>
    <alternativeName>
        <fullName evidence="1">23S rRNA m3Psi1915 methyltransferase</fullName>
    </alternativeName>
    <alternativeName>
        <fullName evidence="1">rRNA (pseudouridine-N3-)-methyltransferase RlmH</fullName>
    </alternativeName>
</protein>
<reference key="1">
    <citation type="journal article" date="2008" name="PLoS ONE">
        <title>Genome sequence of Brucella abortus vaccine strain S19 compared to virulent strains yields candidate virulence genes.</title>
        <authorList>
            <person name="Crasta O.R."/>
            <person name="Folkerts O."/>
            <person name="Fei Z."/>
            <person name="Mane S.P."/>
            <person name="Evans C."/>
            <person name="Martino-Catt S."/>
            <person name="Bricker B."/>
            <person name="Yu G."/>
            <person name="Du L."/>
            <person name="Sobral B.W."/>
        </authorList>
    </citation>
    <scope>NUCLEOTIDE SEQUENCE [LARGE SCALE GENOMIC DNA]</scope>
    <source>
        <strain>S19</strain>
    </source>
</reference>
<feature type="chain" id="PRO_0000366568" description="Ribosomal RNA large subunit methyltransferase H">
    <location>
        <begin position="1"/>
        <end position="169"/>
    </location>
</feature>
<feature type="binding site" evidence="1">
    <location>
        <position position="85"/>
    </location>
    <ligand>
        <name>S-adenosyl-L-methionine</name>
        <dbReference type="ChEBI" id="CHEBI:59789"/>
    </ligand>
</feature>
<feature type="binding site" evidence="1">
    <location>
        <position position="117"/>
    </location>
    <ligand>
        <name>S-adenosyl-L-methionine</name>
        <dbReference type="ChEBI" id="CHEBI:59789"/>
    </ligand>
</feature>
<feature type="binding site" evidence="1">
    <location>
        <begin position="136"/>
        <end position="141"/>
    </location>
    <ligand>
        <name>S-adenosyl-L-methionine</name>
        <dbReference type="ChEBI" id="CHEBI:59789"/>
    </ligand>
</feature>
<name>RLMH_BRUA1</name>
<comment type="function">
    <text evidence="1">Specifically methylates the pseudouridine at position 1915 (m3Psi1915) in 23S rRNA.</text>
</comment>
<comment type="catalytic activity">
    <reaction evidence="1">
        <text>pseudouridine(1915) in 23S rRNA + S-adenosyl-L-methionine = N(3)-methylpseudouridine(1915) in 23S rRNA + S-adenosyl-L-homocysteine + H(+)</text>
        <dbReference type="Rhea" id="RHEA:42752"/>
        <dbReference type="Rhea" id="RHEA-COMP:10221"/>
        <dbReference type="Rhea" id="RHEA-COMP:10222"/>
        <dbReference type="ChEBI" id="CHEBI:15378"/>
        <dbReference type="ChEBI" id="CHEBI:57856"/>
        <dbReference type="ChEBI" id="CHEBI:59789"/>
        <dbReference type="ChEBI" id="CHEBI:65314"/>
        <dbReference type="ChEBI" id="CHEBI:74486"/>
        <dbReference type="EC" id="2.1.1.177"/>
    </reaction>
</comment>
<comment type="subunit">
    <text evidence="1">Homodimer.</text>
</comment>
<comment type="subcellular location">
    <subcellularLocation>
        <location evidence="1">Cytoplasm</location>
    </subcellularLocation>
</comment>
<comment type="similarity">
    <text evidence="1">Belongs to the RNA methyltransferase RlmH family.</text>
</comment>
<gene>
    <name evidence="1" type="primary">rlmH</name>
    <name type="ordered locus">BAbS19_I17280</name>
</gene>
<sequence>MRVSVFAVGRMKSGPERELVERYFDRFAKAGPPLGLEFAGVSEIPESRGQTAQLRKAEEAQRIHEALDNAKSGGTSSGGAALILLDERGKTLGSEAFAAIVGRMRDDGKRQLIVAIGGPDGHDPALRSRADLVLALGELTWPHQIARILIAEQLYRAATILAGHPYHRS</sequence>
<organism>
    <name type="scientific">Brucella abortus (strain S19)</name>
    <dbReference type="NCBI Taxonomy" id="430066"/>
    <lineage>
        <taxon>Bacteria</taxon>
        <taxon>Pseudomonadati</taxon>
        <taxon>Pseudomonadota</taxon>
        <taxon>Alphaproteobacteria</taxon>
        <taxon>Hyphomicrobiales</taxon>
        <taxon>Brucellaceae</taxon>
        <taxon>Brucella/Ochrobactrum group</taxon>
        <taxon>Brucella</taxon>
    </lineage>
</organism>
<dbReference type="EC" id="2.1.1.177" evidence="1"/>
<dbReference type="EMBL" id="CP000887">
    <property type="protein sequence ID" value="ACD73210.1"/>
    <property type="molecule type" value="Genomic_DNA"/>
</dbReference>
<dbReference type="RefSeq" id="WP_002964918.1">
    <property type="nucleotide sequence ID" value="NC_010742.1"/>
</dbReference>
<dbReference type="SMR" id="B2S801"/>
<dbReference type="GeneID" id="93017823"/>
<dbReference type="KEGG" id="bmc:BAbS19_I17280"/>
<dbReference type="HOGENOM" id="CLU_100552_1_1_5"/>
<dbReference type="Proteomes" id="UP000002565">
    <property type="component" value="Chromosome 1"/>
</dbReference>
<dbReference type="GO" id="GO:0005737">
    <property type="term" value="C:cytoplasm"/>
    <property type="evidence" value="ECO:0007669"/>
    <property type="project" value="UniProtKB-SubCell"/>
</dbReference>
<dbReference type="GO" id="GO:0070038">
    <property type="term" value="F:rRNA (pseudouridine-N3-)-methyltransferase activity"/>
    <property type="evidence" value="ECO:0007669"/>
    <property type="project" value="UniProtKB-UniRule"/>
</dbReference>
<dbReference type="CDD" id="cd18081">
    <property type="entry name" value="RlmH-like"/>
    <property type="match status" value="1"/>
</dbReference>
<dbReference type="Gene3D" id="3.40.1280.10">
    <property type="match status" value="1"/>
</dbReference>
<dbReference type="HAMAP" id="MF_00658">
    <property type="entry name" value="23SrRNA_methyltr_H"/>
    <property type="match status" value="1"/>
</dbReference>
<dbReference type="InterPro" id="IPR029028">
    <property type="entry name" value="Alpha/beta_knot_MTases"/>
</dbReference>
<dbReference type="InterPro" id="IPR003742">
    <property type="entry name" value="RlmH-like"/>
</dbReference>
<dbReference type="InterPro" id="IPR029026">
    <property type="entry name" value="tRNA_m1G_MTases_N"/>
</dbReference>
<dbReference type="NCBIfam" id="NF000989">
    <property type="entry name" value="PRK00103.2-3"/>
    <property type="match status" value="1"/>
</dbReference>
<dbReference type="PANTHER" id="PTHR33603">
    <property type="entry name" value="METHYLTRANSFERASE"/>
    <property type="match status" value="1"/>
</dbReference>
<dbReference type="PANTHER" id="PTHR33603:SF1">
    <property type="entry name" value="RIBOSOMAL RNA LARGE SUBUNIT METHYLTRANSFERASE H"/>
    <property type="match status" value="1"/>
</dbReference>
<dbReference type="Pfam" id="PF02590">
    <property type="entry name" value="SPOUT_MTase"/>
    <property type="match status" value="1"/>
</dbReference>
<dbReference type="PIRSF" id="PIRSF004505">
    <property type="entry name" value="MT_bac"/>
    <property type="match status" value="1"/>
</dbReference>
<dbReference type="SUPFAM" id="SSF75217">
    <property type="entry name" value="alpha/beta knot"/>
    <property type="match status" value="1"/>
</dbReference>